<name>SYR_NOCFA</name>
<accession>Q5Z0Z9</accession>
<dbReference type="EC" id="6.1.1.19" evidence="1"/>
<dbReference type="EMBL" id="AP006618">
    <property type="protein sequence ID" value="BAD55892.1"/>
    <property type="molecule type" value="Genomic_DNA"/>
</dbReference>
<dbReference type="RefSeq" id="WP_011207577.1">
    <property type="nucleotide sequence ID" value="NC_006361.1"/>
</dbReference>
<dbReference type="SMR" id="Q5Z0Z9"/>
<dbReference type="STRING" id="247156.NFA_10470"/>
<dbReference type="GeneID" id="61131869"/>
<dbReference type="KEGG" id="nfa:NFA_10470"/>
<dbReference type="eggNOG" id="COG0018">
    <property type="taxonomic scope" value="Bacteria"/>
</dbReference>
<dbReference type="HOGENOM" id="CLU_006406_0_1_11"/>
<dbReference type="OrthoDB" id="9803211at2"/>
<dbReference type="Proteomes" id="UP000006820">
    <property type="component" value="Chromosome"/>
</dbReference>
<dbReference type="GO" id="GO:0005737">
    <property type="term" value="C:cytoplasm"/>
    <property type="evidence" value="ECO:0007669"/>
    <property type="project" value="UniProtKB-SubCell"/>
</dbReference>
<dbReference type="GO" id="GO:0004814">
    <property type="term" value="F:arginine-tRNA ligase activity"/>
    <property type="evidence" value="ECO:0007669"/>
    <property type="project" value="UniProtKB-UniRule"/>
</dbReference>
<dbReference type="GO" id="GO:0005524">
    <property type="term" value="F:ATP binding"/>
    <property type="evidence" value="ECO:0007669"/>
    <property type="project" value="UniProtKB-UniRule"/>
</dbReference>
<dbReference type="GO" id="GO:0006420">
    <property type="term" value="P:arginyl-tRNA aminoacylation"/>
    <property type="evidence" value="ECO:0007669"/>
    <property type="project" value="UniProtKB-UniRule"/>
</dbReference>
<dbReference type="CDD" id="cd00671">
    <property type="entry name" value="ArgRS_core"/>
    <property type="match status" value="1"/>
</dbReference>
<dbReference type="FunFam" id="1.10.730.10:FF:000008">
    <property type="entry name" value="Arginine--tRNA ligase"/>
    <property type="match status" value="1"/>
</dbReference>
<dbReference type="FunFam" id="3.40.50.620:FF:000062">
    <property type="entry name" value="Arginine--tRNA ligase"/>
    <property type="match status" value="1"/>
</dbReference>
<dbReference type="Gene3D" id="3.30.1360.70">
    <property type="entry name" value="Arginyl tRNA synthetase N-terminal domain"/>
    <property type="match status" value="1"/>
</dbReference>
<dbReference type="Gene3D" id="3.40.50.620">
    <property type="entry name" value="HUPs"/>
    <property type="match status" value="1"/>
</dbReference>
<dbReference type="Gene3D" id="1.10.730.10">
    <property type="entry name" value="Isoleucyl-tRNA Synthetase, Domain 1"/>
    <property type="match status" value="1"/>
</dbReference>
<dbReference type="HAMAP" id="MF_00123">
    <property type="entry name" value="Arg_tRNA_synth"/>
    <property type="match status" value="1"/>
</dbReference>
<dbReference type="InterPro" id="IPR001412">
    <property type="entry name" value="aa-tRNA-synth_I_CS"/>
</dbReference>
<dbReference type="InterPro" id="IPR001278">
    <property type="entry name" value="Arg-tRNA-ligase"/>
</dbReference>
<dbReference type="InterPro" id="IPR005148">
    <property type="entry name" value="Arg-tRNA-synth_N"/>
</dbReference>
<dbReference type="InterPro" id="IPR036695">
    <property type="entry name" value="Arg-tRNA-synth_N_sf"/>
</dbReference>
<dbReference type="InterPro" id="IPR035684">
    <property type="entry name" value="ArgRS_core"/>
</dbReference>
<dbReference type="InterPro" id="IPR008909">
    <property type="entry name" value="DALR_anticod-bd"/>
</dbReference>
<dbReference type="InterPro" id="IPR014729">
    <property type="entry name" value="Rossmann-like_a/b/a_fold"/>
</dbReference>
<dbReference type="InterPro" id="IPR009080">
    <property type="entry name" value="tRNAsynth_Ia_anticodon-bd"/>
</dbReference>
<dbReference type="NCBIfam" id="TIGR00456">
    <property type="entry name" value="argS"/>
    <property type="match status" value="1"/>
</dbReference>
<dbReference type="PANTHER" id="PTHR11956:SF5">
    <property type="entry name" value="ARGININE--TRNA LIGASE, CYTOPLASMIC"/>
    <property type="match status" value="1"/>
</dbReference>
<dbReference type="PANTHER" id="PTHR11956">
    <property type="entry name" value="ARGINYL-TRNA SYNTHETASE"/>
    <property type="match status" value="1"/>
</dbReference>
<dbReference type="Pfam" id="PF03485">
    <property type="entry name" value="Arg_tRNA_synt_N"/>
    <property type="match status" value="1"/>
</dbReference>
<dbReference type="Pfam" id="PF05746">
    <property type="entry name" value="DALR_1"/>
    <property type="match status" value="1"/>
</dbReference>
<dbReference type="Pfam" id="PF00750">
    <property type="entry name" value="tRNA-synt_1d"/>
    <property type="match status" value="1"/>
</dbReference>
<dbReference type="PRINTS" id="PR01038">
    <property type="entry name" value="TRNASYNTHARG"/>
</dbReference>
<dbReference type="SMART" id="SM01016">
    <property type="entry name" value="Arg_tRNA_synt_N"/>
    <property type="match status" value="1"/>
</dbReference>
<dbReference type="SMART" id="SM00836">
    <property type="entry name" value="DALR_1"/>
    <property type="match status" value="1"/>
</dbReference>
<dbReference type="SUPFAM" id="SSF47323">
    <property type="entry name" value="Anticodon-binding domain of a subclass of class I aminoacyl-tRNA synthetases"/>
    <property type="match status" value="1"/>
</dbReference>
<dbReference type="SUPFAM" id="SSF55190">
    <property type="entry name" value="Arginyl-tRNA synthetase (ArgRS), N-terminal 'additional' domain"/>
    <property type="match status" value="1"/>
</dbReference>
<dbReference type="SUPFAM" id="SSF52374">
    <property type="entry name" value="Nucleotidylyl transferase"/>
    <property type="match status" value="1"/>
</dbReference>
<dbReference type="PROSITE" id="PS00178">
    <property type="entry name" value="AA_TRNA_LIGASE_I"/>
    <property type="match status" value="1"/>
</dbReference>
<feature type="chain" id="PRO_0000242058" description="Arginine--tRNA ligase">
    <location>
        <begin position="1"/>
        <end position="552"/>
    </location>
</feature>
<feature type="short sequence motif" description="'HIGH' region">
    <location>
        <begin position="130"/>
        <end position="140"/>
    </location>
</feature>
<keyword id="KW-0030">Aminoacyl-tRNA synthetase</keyword>
<keyword id="KW-0067">ATP-binding</keyword>
<keyword id="KW-0963">Cytoplasm</keyword>
<keyword id="KW-0436">Ligase</keyword>
<keyword id="KW-0547">Nucleotide-binding</keyword>
<keyword id="KW-0648">Protein biosynthesis</keyword>
<keyword id="KW-1185">Reference proteome</keyword>
<proteinExistence type="inferred from homology"/>
<sequence>MTPADLADLLRATAAKVLAERGLDPAVLPDEVTVERPRNPEHGDYATNLAMKVAKKAGTNPRDLAGWLAEALGAADGITSAEVAGPGFLNIRLAAAAQGAVLEQVLAAGSGYGTADTLRGTKINLEFVSANPTGPIHLGGTRWASVGDALGRILAAQGADVTREYYFNDHGAQIDRFANSLVAAATGQPTPDDGYAGAYIGEIAEQIVAEHPEAPTLPADQRHELFRAEGVELMFAHIKRTLHEFGTDFDVYFNESTLFASGAVEQAVETLKASGDLYEKDGAWWIASSEYGDDQDRVVIKSDGNAAYIAGDIAYFQNKRSRGFDLCIYMLGADHHGYIGRLKAAAAAFGDDPATVEVLIGQMVNLVRDGQAVKMSKRAGTVVTLDDLVEAIGVDAARYALVRWSVNSSVDIDLNLWTSQKNENPVYYVQYAHARTASIGRNAAAFDYASVTPDLSQLTAEEEGELIRTIGEYPRVVASAASLREPHRVARYLEELAGAYHRFQTNSKLRVLPLGDDPVSPLNAARLVLVNATRQVLANGLALLGVSAPEQM</sequence>
<evidence type="ECO:0000255" key="1">
    <source>
        <dbReference type="HAMAP-Rule" id="MF_00123"/>
    </source>
</evidence>
<reference key="1">
    <citation type="journal article" date="2004" name="Proc. Natl. Acad. Sci. U.S.A.">
        <title>The complete genomic sequence of Nocardia farcinica IFM 10152.</title>
        <authorList>
            <person name="Ishikawa J."/>
            <person name="Yamashita A."/>
            <person name="Mikami Y."/>
            <person name="Hoshino Y."/>
            <person name="Kurita H."/>
            <person name="Hotta K."/>
            <person name="Shiba T."/>
            <person name="Hattori M."/>
        </authorList>
    </citation>
    <scope>NUCLEOTIDE SEQUENCE [LARGE SCALE GENOMIC DNA]</scope>
    <source>
        <strain>IFM 10152</strain>
    </source>
</reference>
<organism>
    <name type="scientific">Nocardia farcinica (strain IFM 10152)</name>
    <dbReference type="NCBI Taxonomy" id="247156"/>
    <lineage>
        <taxon>Bacteria</taxon>
        <taxon>Bacillati</taxon>
        <taxon>Actinomycetota</taxon>
        <taxon>Actinomycetes</taxon>
        <taxon>Mycobacteriales</taxon>
        <taxon>Nocardiaceae</taxon>
        <taxon>Nocardia</taxon>
    </lineage>
</organism>
<gene>
    <name evidence="1" type="primary">argS</name>
    <name type="ordered locus">NFA_10470</name>
</gene>
<comment type="catalytic activity">
    <reaction evidence="1">
        <text>tRNA(Arg) + L-arginine + ATP = L-arginyl-tRNA(Arg) + AMP + diphosphate</text>
        <dbReference type="Rhea" id="RHEA:20301"/>
        <dbReference type="Rhea" id="RHEA-COMP:9658"/>
        <dbReference type="Rhea" id="RHEA-COMP:9673"/>
        <dbReference type="ChEBI" id="CHEBI:30616"/>
        <dbReference type="ChEBI" id="CHEBI:32682"/>
        <dbReference type="ChEBI" id="CHEBI:33019"/>
        <dbReference type="ChEBI" id="CHEBI:78442"/>
        <dbReference type="ChEBI" id="CHEBI:78513"/>
        <dbReference type="ChEBI" id="CHEBI:456215"/>
        <dbReference type="EC" id="6.1.1.19"/>
    </reaction>
</comment>
<comment type="subunit">
    <text evidence="1">Monomer.</text>
</comment>
<comment type="subcellular location">
    <subcellularLocation>
        <location evidence="1">Cytoplasm</location>
    </subcellularLocation>
</comment>
<comment type="similarity">
    <text evidence="1">Belongs to the class-I aminoacyl-tRNA synthetase family.</text>
</comment>
<protein>
    <recommendedName>
        <fullName evidence="1">Arginine--tRNA ligase</fullName>
        <ecNumber evidence="1">6.1.1.19</ecNumber>
    </recommendedName>
    <alternativeName>
        <fullName evidence="1">Arginyl-tRNA synthetase</fullName>
        <shortName evidence="1">ArgRS</shortName>
    </alternativeName>
</protein>